<evidence type="ECO:0000255" key="1">
    <source>
        <dbReference type="HAMAP-Rule" id="MF_00017"/>
    </source>
</evidence>
<organism>
    <name type="scientific">Shigella boydii serotype 18 (strain CDC 3083-94 / BS512)</name>
    <dbReference type="NCBI Taxonomy" id="344609"/>
    <lineage>
        <taxon>Bacteria</taxon>
        <taxon>Pseudomonadati</taxon>
        <taxon>Pseudomonadota</taxon>
        <taxon>Gammaproteobacteria</taxon>
        <taxon>Enterobacterales</taxon>
        <taxon>Enterobacteriaceae</taxon>
        <taxon>Shigella</taxon>
    </lineage>
</organism>
<reference key="1">
    <citation type="submission" date="2008-05" db="EMBL/GenBank/DDBJ databases">
        <title>Complete sequence of Shigella boydii serotype 18 strain BS512.</title>
        <authorList>
            <person name="Rasko D.A."/>
            <person name="Rosovitz M."/>
            <person name="Maurelli A.T."/>
            <person name="Myers G."/>
            <person name="Seshadri R."/>
            <person name="Cer R."/>
            <person name="Jiang L."/>
            <person name="Ravel J."/>
            <person name="Sebastian Y."/>
        </authorList>
    </citation>
    <scope>NUCLEOTIDE SEQUENCE [LARGE SCALE GENOMIC DNA]</scope>
    <source>
        <strain>CDC 3083-94 / BS512</strain>
    </source>
</reference>
<keyword id="KW-0227">DNA damage</keyword>
<keyword id="KW-0233">DNA recombination</keyword>
<keyword id="KW-0234">DNA repair</keyword>
<keyword id="KW-0479">Metal-binding</keyword>
<keyword id="KW-1185">Reference proteome</keyword>
<keyword id="KW-0862">Zinc</keyword>
<keyword id="KW-0863">Zinc-finger</keyword>
<dbReference type="EMBL" id="CP001063">
    <property type="protein sequence ID" value="ACD06436.1"/>
    <property type="molecule type" value="Genomic_DNA"/>
</dbReference>
<dbReference type="RefSeq" id="WP_001195025.1">
    <property type="nucleotide sequence ID" value="NC_010658.1"/>
</dbReference>
<dbReference type="SMR" id="B2U4S5"/>
<dbReference type="STRING" id="344609.SbBS512_E0404"/>
<dbReference type="GeneID" id="93776978"/>
<dbReference type="KEGG" id="sbc:SbBS512_E0404"/>
<dbReference type="HOGENOM" id="CLU_060739_1_2_6"/>
<dbReference type="Proteomes" id="UP000001030">
    <property type="component" value="Chromosome"/>
</dbReference>
<dbReference type="GO" id="GO:0003677">
    <property type="term" value="F:DNA binding"/>
    <property type="evidence" value="ECO:0007669"/>
    <property type="project" value="UniProtKB-UniRule"/>
</dbReference>
<dbReference type="GO" id="GO:0008270">
    <property type="term" value="F:zinc ion binding"/>
    <property type="evidence" value="ECO:0007669"/>
    <property type="project" value="UniProtKB-KW"/>
</dbReference>
<dbReference type="GO" id="GO:0006310">
    <property type="term" value="P:DNA recombination"/>
    <property type="evidence" value="ECO:0007669"/>
    <property type="project" value="UniProtKB-UniRule"/>
</dbReference>
<dbReference type="GO" id="GO:0006281">
    <property type="term" value="P:DNA repair"/>
    <property type="evidence" value="ECO:0007669"/>
    <property type="project" value="UniProtKB-UniRule"/>
</dbReference>
<dbReference type="CDD" id="cd01025">
    <property type="entry name" value="TOPRIM_recR"/>
    <property type="match status" value="1"/>
</dbReference>
<dbReference type="FunFam" id="1.10.8.420:FF:000001">
    <property type="entry name" value="Recombination protein RecR"/>
    <property type="match status" value="1"/>
</dbReference>
<dbReference type="FunFam" id="3.40.1360.10:FF:000001">
    <property type="entry name" value="Recombination protein RecR"/>
    <property type="match status" value="1"/>
</dbReference>
<dbReference type="Gene3D" id="3.40.1360.10">
    <property type="match status" value="1"/>
</dbReference>
<dbReference type="Gene3D" id="6.10.250.240">
    <property type="match status" value="1"/>
</dbReference>
<dbReference type="Gene3D" id="1.10.8.420">
    <property type="entry name" value="RecR Domain 1"/>
    <property type="match status" value="1"/>
</dbReference>
<dbReference type="HAMAP" id="MF_00017">
    <property type="entry name" value="RecR"/>
    <property type="match status" value="1"/>
</dbReference>
<dbReference type="InterPro" id="IPR000093">
    <property type="entry name" value="DNA_Rcmb_RecR"/>
</dbReference>
<dbReference type="InterPro" id="IPR023627">
    <property type="entry name" value="Rcmb_RecR"/>
</dbReference>
<dbReference type="InterPro" id="IPR015967">
    <property type="entry name" value="Rcmb_RecR_Znf"/>
</dbReference>
<dbReference type="InterPro" id="IPR006171">
    <property type="entry name" value="TOPRIM_dom"/>
</dbReference>
<dbReference type="InterPro" id="IPR034137">
    <property type="entry name" value="TOPRIM_RecR"/>
</dbReference>
<dbReference type="NCBIfam" id="TIGR00615">
    <property type="entry name" value="recR"/>
    <property type="match status" value="1"/>
</dbReference>
<dbReference type="PANTHER" id="PTHR30446">
    <property type="entry name" value="RECOMBINATION PROTEIN RECR"/>
    <property type="match status" value="1"/>
</dbReference>
<dbReference type="PANTHER" id="PTHR30446:SF0">
    <property type="entry name" value="RECOMBINATION PROTEIN RECR"/>
    <property type="match status" value="1"/>
</dbReference>
<dbReference type="Pfam" id="PF21175">
    <property type="entry name" value="RecR_C"/>
    <property type="match status" value="1"/>
</dbReference>
<dbReference type="Pfam" id="PF21176">
    <property type="entry name" value="RecR_HhH"/>
    <property type="match status" value="1"/>
</dbReference>
<dbReference type="Pfam" id="PF02132">
    <property type="entry name" value="RecR_ZnF"/>
    <property type="match status" value="1"/>
</dbReference>
<dbReference type="Pfam" id="PF13662">
    <property type="entry name" value="Toprim_4"/>
    <property type="match status" value="1"/>
</dbReference>
<dbReference type="SMART" id="SM00493">
    <property type="entry name" value="TOPRIM"/>
    <property type="match status" value="1"/>
</dbReference>
<dbReference type="SUPFAM" id="SSF111304">
    <property type="entry name" value="Recombination protein RecR"/>
    <property type="match status" value="1"/>
</dbReference>
<dbReference type="PROSITE" id="PS01300">
    <property type="entry name" value="RECR"/>
    <property type="match status" value="1"/>
</dbReference>
<dbReference type="PROSITE" id="PS50880">
    <property type="entry name" value="TOPRIM"/>
    <property type="match status" value="1"/>
</dbReference>
<sequence>MQTSPLLTQLMEALRCLPGVGPKSAQRMAFTLLQRDRSGGMRLAQALTRAMSEIGHCADCRTFTEQEVCNICSNPRRQENGQICVVESPADIYAIEQTGQFSGRYFVLMGHLSPLDGIGPDDIGLDRLEQRLAEEKITEVILATNPTVEGEATANYIAELCAQYDVEASRIAHGVPVGGELEMVDGTTLSHSLAGRHKIRF</sequence>
<proteinExistence type="inferred from homology"/>
<feature type="chain" id="PRO_1000089771" description="Recombination protein RecR">
    <location>
        <begin position="1"/>
        <end position="201"/>
    </location>
</feature>
<feature type="domain" description="Toprim" evidence="1">
    <location>
        <begin position="81"/>
        <end position="176"/>
    </location>
</feature>
<feature type="zinc finger region" description="C4-type" evidence="1">
    <location>
        <begin position="57"/>
        <end position="72"/>
    </location>
</feature>
<name>RECR_SHIB3</name>
<accession>B2U4S5</accession>
<gene>
    <name evidence="1" type="primary">recR</name>
    <name type="ordered locus">SbBS512_E0404</name>
</gene>
<protein>
    <recommendedName>
        <fullName evidence="1">Recombination protein RecR</fullName>
    </recommendedName>
</protein>
<comment type="function">
    <text evidence="1">May play a role in DNA repair. It seems to be involved in an RecBC-independent recombinational process of DNA repair. It may act with RecF and RecO.</text>
</comment>
<comment type="similarity">
    <text evidence="1">Belongs to the RecR family.</text>
</comment>